<accession>P33038</accession>
<accession>D5CCD2</accession>
<comment type="function">
    <text evidence="2 3">Cell wall formation. Adds enolpyruvyl to UDP-N-acetylglucosamine (PubMed:20392080, PubMed:22378791). Target for the antibiotic fosfomycin.</text>
</comment>
<comment type="catalytic activity">
    <reaction evidence="1 2 3">
        <text>phosphoenolpyruvate + UDP-N-acetyl-alpha-D-glucosamine = UDP-N-acetyl-3-O-(1-carboxyvinyl)-alpha-D-glucosamine + phosphate</text>
        <dbReference type="Rhea" id="RHEA:18681"/>
        <dbReference type="ChEBI" id="CHEBI:43474"/>
        <dbReference type="ChEBI" id="CHEBI:57705"/>
        <dbReference type="ChEBI" id="CHEBI:58702"/>
        <dbReference type="ChEBI" id="CHEBI:68483"/>
        <dbReference type="EC" id="2.5.1.7"/>
    </reaction>
</comment>
<comment type="activity regulation">
    <text evidence="2">In vitro inhibited by covalent binding of fosfomycin and the fungal product terreic acid in the presence of substrate UDP-N-acetylglucosamine, with an inactivation rate constant of 130 M(-1)sec(-1) for terreic acid.</text>
</comment>
<comment type="pathway">
    <text evidence="1">Cell wall biogenesis; peptidoglycan biosynthesis.</text>
</comment>
<comment type="subcellular location">
    <subcellularLocation>
        <location evidence="1">Cytoplasm</location>
    </subcellularLocation>
</comment>
<comment type="similarity">
    <text evidence="1">Belongs to the EPSP synthase family. MurA subfamily.</text>
</comment>
<feature type="chain" id="PRO_0000178873" description="UDP-N-acetylglucosamine 1-carboxyvinyltransferase">
    <location>
        <begin position="1"/>
        <end position="419"/>
    </location>
</feature>
<feature type="active site" description="Proton donor" evidence="2 3 10">
    <location>
        <position position="115"/>
    </location>
</feature>
<feature type="binding site" evidence="4 15">
    <location>
        <begin position="22"/>
        <end position="23"/>
    </location>
    <ligand>
        <name>phosphoenolpyruvate</name>
        <dbReference type="ChEBI" id="CHEBI:58702"/>
    </ligand>
</feature>
<feature type="binding site" evidence="1">
    <location>
        <position position="91"/>
    </location>
    <ligand>
        <name>UDP-N-acetyl-alpha-D-glucosamine</name>
        <dbReference type="ChEBI" id="CHEBI:57705"/>
    </ligand>
</feature>
<feature type="binding site" evidence="2 3 10 15">
    <location>
        <begin position="120"/>
        <end position="124"/>
    </location>
    <ligand>
        <name>UDP-N-acetyl-alpha-D-glucosamine</name>
        <dbReference type="ChEBI" id="CHEBI:57705"/>
    </ligand>
</feature>
<feature type="binding site" evidence="3 15">
    <location>
        <begin position="160"/>
        <end position="163"/>
    </location>
    <ligand>
        <name>UDP-N-acetyl-alpha-D-glucosamine</name>
        <dbReference type="ChEBI" id="CHEBI:57705"/>
    </ligand>
</feature>
<feature type="binding site" evidence="2 3 10 15">
    <location>
        <position position="305"/>
    </location>
    <ligand>
        <name>UDP-N-acetyl-alpha-D-glucosamine</name>
        <dbReference type="ChEBI" id="CHEBI:57705"/>
    </ligand>
</feature>
<feature type="binding site" evidence="2 3 10 15">
    <location>
        <position position="327"/>
    </location>
    <ligand>
        <name>UDP-N-acetyl-alpha-D-glucosamine</name>
        <dbReference type="ChEBI" id="CHEBI:57705"/>
    </ligand>
</feature>
<feature type="modified residue" description="2-(S-cysteinyl)pyruvic acid O-phosphothioketal" evidence="3">
    <location>
        <position position="115"/>
    </location>
</feature>
<feature type="mutagenesis site" description="Significantly lower binding of phosphoenolpyruvate." evidence="3">
    <original>C</original>
    <variation>D</variation>
    <location>
        <position position="115"/>
    </location>
</feature>
<feature type="mutagenesis site" description="Loss of activity, but not of substrate binding.">
    <original>C</original>
    <variation>S</variation>
    <location>
        <position position="115"/>
    </location>
</feature>
<feature type="mutagenesis site" description="Loss of activity." evidence="3">
    <original>R</original>
    <variation>A</variation>
    <location>
        <position position="120"/>
    </location>
</feature>
<feature type="strand" evidence="19">
    <location>
        <begin position="2"/>
        <end position="8"/>
    </location>
</feature>
<feature type="strand" evidence="19">
    <location>
        <begin position="13"/>
        <end position="17"/>
    </location>
</feature>
<feature type="helix" evidence="19">
    <location>
        <begin position="22"/>
        <end position="31"/>
    </location>
</feature>
<feature type="helix" evidence="19">
    <location>
        <begin position="32"/>
        <end position="34"/>
    </location>
</feature>
<feature type="strand" evidence="19">
    <location>
        <begin position="35"/>
        <end position="37"/>
    </location>
</feature>
<feature type="strand" evidence="19">
    <location>
        <begin position="39"/>
        <end position="43"/>
    </location>
</feature>
<feature type="helix" evidence="19">
    <location>
        <begin position="48"/>
        <end position="59"/>
    </location>
</feature>
<feature type="strand" evidence="19">
    <location>
        <begin position="63"/>
        <end position="65"/>
    </location>
</feature>
<feature type="strand" evidence="19">
    <location>
        <begin position="70"/>
        <end position="73"/>
    </location>
</feature>
<feature type="helix" evidence="19">
    <location>
        <begin position="84"/>
        <end position="87"/>
    </location>
</feature>
<feature type="helix" evidence="19">
    <location>
        <begin position="91"/>
        <end position="96"/>
    </location>
</feature>
<feature type="helix" evidence="19">
    <location>
        <begin position="97"/>
        <end position="104"/>
    </location>
</feature>
<feature type="strand" evidence="19">
    <location>
        <begin position="105"/>
        <end position="110"/>
    </location>
</feature>
<feature type="strand" evidence="20">
    <location>
        <begin position="115"/>
        <end position="118"/>
    </location>
</feature>
<feature type="helix" evidence="22">
    <location>
        <begin position="120"/>
        <end position="122"/>
    </location>
</feature>
<feature type="helix" evidence="19">
    <location>
        <begin position="123"/>
        <end position="131"/>
    </location>
</feature>
<feature type="strand" evidence="19">
    <location>
        <begin position="135"/>
        <end position="139"/>
    </location>
</feature>
<feature type="strand" evidence="19">
    <location>
        <begin position="142"/>
        <end position="146"/>
    </location>
</feature>
<feature type="strand" evidence="19">
    <location>
        <begin position="148"/>
        <end position="150"/>
    </location>
</feature>
<feature type="strand" evidence="19">
    <location>
        <begin position="155"/>
        <end position="157"/>
    </location>
</feature>
<feature type="helix" evidence="19">
    <location>
        <begin position="163"/>
        <end position="173"/>
    </location>
</feature>
<feature type="strand" evidence="19">
    <location>
        <begin position="176"/>
        <end position="183"/>
    </location>
</feature>
<feature type="helix" evidence="19">
    <location>
        <begin position="189"/>
        <end position="200"/>
    </location>
</feature>
<feature type="strand" evidence="19">
    <location>
        <begin position="204"/>
        <end position="206"/>
    </location>
</feature>
<feature type="strand" evidence="19">
    <location>
        <begin position="210"/>
        <end position="216"/>
    </location>
</feature>
<feature type="strand" evidence="19">
    <location>
        <begin position="224"/>
        <end position="227"/>
    </location>
</feature>
<feature type="helix" evidence="19">
    <location>
        <begin position="232"/>
        <end position="243"/>
    </location>
</feature>
<feature type="turn" evidence="19">
    <location>
        <begin position="244"/>
        <end position="246"/>
    </location>
</feature>
<feature type="strand" evidence="19">
    <location>
        <begin position="248"/>
        <end position="253"/>
    </location>
</feature>
<feature type="helix" evidence="19">
    <location>
        <begin position="256"/>
        <end position="258"/>
    </location>
</feature>
<feature type="helix" evidence="19">
    <location>
        <begin position="260"/>
        <end position="268"/>
    </location>
</feature>
<feature type="strand" evidence="19">
    <location>
        <begin position="272"/>
        <end position="275"/>
    </location>
</feature>
<feature type="strand" evidence="19">
    <location>
        <begin position="277"/>
        <end position="283"/>
    </location>
</feature>
<feature type="strand" evidence="23">
    <location>
        <begin position="293"/>
        <end position="295"/>
    </location>
</feature>
<feature type="helix" evidence="19">
    <location>
        <begin position="304"/>
        <end position="306"/>
    </location>
</feature>
<feature type="helix" evidence="19">
    <location>
        <begin position="307"/>
        <end position="315"/>
    </location>
</feature>
<feature type="strand" evidence="19">
    <location>
        <begin position="317"/>
        <end position="324"/>
    </location>
</feature>
<feature type="strand" evidence="23">
    <location>
        <begin position="326"/>
        <end position="328"/>
    </location>
</feature>
<feature type="turn" evidence="21">
    <location>
        <begin position="329"/>
        <end position="333"/>
    </location>
</feature>
<feature type="helix" evidence="19">
    <location>
        <begin position="334"/>
        <end position="340"/>
    </location>
</feature>
<feature type="strand" evidence="19">
    <location>
        <begin position="344"/>
        <end position="348"/>
    </location>
</feature>
<feature type="strand" evidence="19">
    <location>
        <begin position="351"/>
        <end position="355"/>
    </location>
</feature>
<feature type="strand" evidence="23">
    <location>
        <begin position="364"/>
        <end position="366"/>
    </location>
</feature>
<feature type="helix" evidence="19">
    <location>
        <begin position="370"/>
        <end position="382"/>
    </location>
</feature>
<feature type="strand" evidence="19">
    <location>
        <begin position="383"/>
        <end position="389"/>
    </location>
</feature>
<feature type="helix" evidence="19">
    <location>
        <begin position="393"/>
        <end position="398"/>
    </location>
</feature>
<feature type="strand" evidence="19">
    <location>
        <begin position="399"/>
        <end position="401"/>
    </location>
</feature>
<feature type="helix" evidence="19">
    <location>
        <begin position="402"/>
        <end position="407"/>
    </location>
</feature>
<feature type="turn" evidence="19">
    <location>
        <begin position="408"/>
        <end position="410"/>
    </location>
</feature>
<feature type="strand" evidence="19">
    <location>
        <begin position="412"/>
        <end position="417"/>
    </location>
</feature>
<proteinExistence type="evidence at protein level"/>
<evidence type="ECO:0000255" key="1">
    <source>
        <dbReference type="HAMAP-Rule" id="MF_00111"/>
    </source>
</evidence>
<evidence type="ECO:0000269" key="2">
    <source>
    </source>
</evidence>
<evidence type="ECO:0000269" key="3">
    <source>
    </source>
</evidence>
<evidence type="ECO:0000305" key="4">
    <source>
    </source>
</evidence>
<evidence type="ECO:0007744" key="5">
    <source>
        <dbReference type="PDB" id="1DLG"/>
    </source>
</evidence>
<evidence type="ECO:0007744" key="6">
    <source>
        <dbReference type="PDB" id="1EJC"/>
    </source>
</evidence>
<evidence type="ECO:0007744" key="7">
    <source>
        <dbReference type="PDB" id="1EJD"/>
    </source>
</evidence>
<evidence type="ECO:0007744" key="8">
    <source>
        <dbReference type="PDB" id="1NAW"/>
    </source>
</evidence>
<evidence type="ECO:0007744" key="9">
    <source>
        <dbReference type="PDB" id="3KQA"/>
    </source>
</evidence>
<evidence type="ECO:0007744" key="10">
    <source>
        <dbReference type="PDB" id="3LTH"/>
    </source>
</evidence>
<evidence type="ECO:0007744" key="11">
    <source>
        <dbReference type="PDB" id="3SPB"/>
    </source>
</evidence>
<evidence type="ECO:0007744" key="12">
    <source>
        <dbReference type="PDB" id="3SU9"/>
    </source>
</evidence>
<evidence type="ECO:0007744" key="13">
    <source>
        <dbReference type="PDB" id="3SWA"/>
    </source>
</evidence>
<evidence type="ECO:0007744" key="14">
    <source>
        <dbReference type="PDB" id="3SWI"/>
    </source>
</evidence>
<evidence type="ECO:0007744" key="15">
    <source>
        <dbReference type="PDB" id="3SWQ"/>
    </source>
</evidence>
<evidence type="ECO:0007744" key="16">
    <source>
        <dbReference type="PDB" id="3UPK"/>
    </source>
</evidence>
<evidence type="ECO:0007744" key="17">
    <source>
        <dbReference type="PDB" id="3V4T"/>
    </source>
</evidence>
<evidence type="ECO:0007744" key="18">
    <source>
        <dbReference type="PDB" id="3V5V"/>
    </source>
</evidence>
<evidence type="ECO:0007829" key="19">
    <source>
        <dbReference type="PDB" id="1EJD"/>
    </source>
</evidence>
<evidence type="ECO:0007829" key="20">
    <source>
        <dbReference type="PDB" id="3SWA"/>
    </source>
</evidence>
<evidence type="ECO:0007829" key="21">
    <source>
        <dbReference type="PDB" id="3V4T"/>
    </source>
</evidence>
<evidence type="ECO:0007829" key="22">
    <source>
        <dbReference type="PDB" id="4E7B"/>
    </source>
</evidence>
<evidence type="ECO:0007829" key="23">
    <source>
        <dbReference type="PDB" id="4E7G"/>
    </source>
</evidence>
<name>MURA_ENTCC</name>
<reference key="1">
    <citation type="journal article" date="1992" name="FEBS Lett.">
        <title>The UDP-N-acetylglucosamine 1-carboxyvinyl-transferase of Enterobacter cloacae. Molecular cloning, sequencing of the gene and overexpression of the enzyme.</title>
        <authorList>
            <person name="Wanke C."/>
            <person name="Falchetto R."/>
            <person name="Amrhein N."/>
        </authorList>
    </citation>
    <scope>NUCLEOTIDE SEQUENCE [GENOMIC DNA]</scope>
    <scope>PARTIAL PROTEIN SEQUENCE</scope>
</reference>
<reference key="2">
    <citation type="journal article" date="2010" name="J. Bacteriol.">
        <title>Complete genome sequence of Enterobacter cloacae subsp. cloacae type strain ATCC 13047.</title>
        <authorList>
            <person name="Ren Y."/>
            <person name="Ren Y."/>
            <person name="Zhou Z."/>
            <person name="Guo X."/>
            <person name="Li Y."/>
            <person name="Feng L."/>
            <person name="Wang L."/>
        </authorList>
    </citation>
    <scope>NUCLEOTIDE SEQUENCE [LARGE SCALE GENOMIC DNA]</scope>
    <source>
        <strain>ATCC 13047 / DSM 30054 / NBRC 13535 / NCTC 10005 / WDCM 00083 / NCDC 279-56</strain>
    </source>
</reference>
<reference evidence="8" key="3">
    <citation type="journal article" date="1996" name="Structure">
        <title>Crystal structure of UDP-N-acetylglucosamine enolpyruvyltransferase, the target of the antibiotic fosfomycin.</title>
        <authorList>
            <person name="Schoenbrunn E."/>
            <person name="Sack S."/>
            <person name="Eschenburg S."/>
            <person name="Perrakis A."/>
            <person name="Krekel N."/>
            <person name="Mandelkow E."/>
        </authorList>
    </citation>
    <scope>X-RAY CRYSTALLOGRAPHY (2.0 ANGSTROMS)</scope>
</reference>
<reference evidence="5" key="4">
    <citation type="journal article" date="2000" name="Biochemistry">
        <title>Role of the loop containing residue 115 in the induced-fit mechanism of the bacterial cell wall biosynthetic enzyme murA.</title>
        <authorList>
            <person name="Schoenbrunn E."/>
            <person name="Eschenburg S."/>
            <person name="Krekel F."/>
            <person name="Luger K."/>
            <person name="Amrhein N."/>
        </authorList>
    </citation>
    <scope>X-RAY CRYSTALLOGRAPHY (1.8 ANGSTROMS) OF WILD-TYPE AND MUTANT SER-115</scope>
</reference>
<reference evidence="6 7" key="5">
    <citation type="journal article" date="2000" name="Proteins">
        <title>Comparative X-ray analysis of the un-liganded fosfomycin-target murA.</title>
        <authorList>
            <person name="Eschenburg S."/>
            <person name="Schoenbrunn E."/>
        </authorList>
    </citation>
    <scope>X-RAY CRYSTALLOGRAPHY (1.55 ANGSTROMS)</scope>
</reference>
<reference evidence="9 10" key="6">
    <citation type="journal article" date="2010" name="Biochemistry">
        <title>The fungal product terreic acid is a covalent inhibitor of the bacterial cell wall biosynthetic enzyme UDP-N-acetylglucosamine 1-carboxyvinyltransferase (MurA).</title>
        <authorList>
            <person name="Han H."/>
            <person name="Yang Y."/>
            <person name="Olesen S.H."/>
            <person name="Becker A."/>
            <person name="Betzi S."/>
            <person name="Schoenbrunn E."/>
        </authorList>
    </citation>
    <scope>X-RAY CRYSTALLOGRAPHY (1.75 ANGSTROMS) IN COMPLEX WITH UDP-N-ACETYLGLUCOSAMINE; FOSFOMYCIN AND TERREIC ACID</scope>
    <scope>FUNCTION</scope>
    <scope>CATALYTIC ACTIVITY</scope>
    <scope>ACTIVITY REGULATION</scope>
    <scope>ACTIVE SITE</scope>
</reference>
<reference evidence="11 12 13 14 15 16 17 18" key="7">
    <citation type="journal article" date="2012" name="J. Biol. Chem.">
        <title>Functional consequence of covalent reaction of phosphoenolpyruvate with UDP-N-acetylglucosamine 1-carboxyvinyltransferase (MurA).</title>
        <authorList>
            <person name="Zhu J.Y."/>
            <person name="Yang Y."/>
            <person name="Han H."/>
            <person name="Betzi S."/>
            <person name="Olesen S.H."/>
            <person name="Marsilio F."/>
            <person name="Schoenbrunn E."/>
        </authorList>
    </citation>
    <scope>X-RAY CRYSTALLOGRAPHY (1.83 ANGSTROMS) OF WILD TYPE AND MUTANTS ASP-115 AND ALA-120 IN COMPLEXES WITH UDP-N-ACETYLGLUCOSAMINE AND SUBSTRATE ANALOGS</scope>
    <scope>FUNCTION</scope>
    <scope>CATALYTIC ACTIVITY</scope>
    <scope>ACTIVE SITE</scope>
    <scope>FORMATION OF COVALENT REACTION INTERMEDIATE</scope>
    <scope>MUTAGENESIS OF CYS-115 AND ARG-120</scope>
    <scope>REACTION MECHANISM</scope>
</reference>
<dbReference type="EC" id="2.5.1.7" evidence="1"/>
<dbReference type="EMBL" id="Z11835">
    <property type="protein sequence ID" value="CAA77856.1"/>
    <property type="molecule type" value="Genomic_DNA"/>
</dbReference>
<dbReference type="EMBL" id="CP001918">
    <property type="protein sequence ID" value="ADF64099.1"/>
    <property type="molecule type" value="Genomic_DNA"/>
</dbReference>
<dbReference type="PIR" id="S22372">
    <property type="entry name" value="S22372"/>
</dbReference>
<dbReference type="RefSeq" id="WP_013098931.1">
    <property type="nucleotide sequence ID" value="NC_014121.1"/>
</dbReference>
<dbReference type="RefSeq" id="YP_003615048.1">
    <property type="nucleotide sequence ID" value="NC_014121.1"/>
</dbReference>
<dbReference type="PDB" id="1DLG">
    <property type="method" value="X-ray"/>
    <property type="resolution" value="1.90 A"/>
    <property type="chains" value="A/B=1-419"/>
</dbReference>
<dbReference type="PDB" id="1EJC">
    <property type="method" value="X-ray"/>
    <property type="resolution" value="1.80 A"/>
    <property type="chains" value="A=1-419"/>
</dbReference>
<dbReference type="PDB" id="1EJD">
    <property type="method" value="X-ray"/>
    <property type="resolution" value="1.55 A"/>
    <property type="chains" value="A/B=1-419"/>
</dbReference>
<dbReference type="PDB" id="1EYN">
    <property type="method" value="X-ray"/>
    <property type="resolution" value="1.70 A"/>
    <property type="chains" value="A=1-419"/>
</dbReference>
<dbReference type="PDB" id="1NAW">
    <property type="method" value="X-ray"/>
    <property type="resolution" value="2.00 A"/>
    <property type="chains" value="A/B=1-419"/>
</dbReference>
<dbReference type="PDB" id="1Q3G">
    <property type="method" value="X-ray"/>
    <property type="resolution" value="2.65 A"/>
    <property type="chains" value="A/B/C/D/E/F/G/H/I/J/K/L/W/X/Y/Z=1-419"/>
</dbReference>
<dbReference type="PDB" id="1RYW">
    <property type="method" value="X-ray"/>
    <property type="resolution" value="2.30 A"/>
    <property type="chains" value="A/B/C/D/E/F/G/H=1-419"/>
</dbReference>
<dbReference type="PDB" id="1YBG">
    <property type="method" value="X-ray"/>
    <property type="resolution" value="2.60 A"/>
    <property type="chains" value="A/B/C/D=1-419"/>
</dbReference>
<dbReference type="PDB" id="3KQA">
    <property type="method" value="X-ray"/>
    <property type="resolution" value="2.25 A"/>
    <property type="chains" value="A/B/C/D=1-419"/>
</dbReference>
<dbReference type="PDB" id="3LTH">
    <property type="method" value="X-ray"/>
    <property type="resolution" value="1.75 A"/>
    <property type="chains" value="A=1-419"/>
</dbReference>
<dbReference type="PDB" id="3SPB">
    <property type="method" value="X-ray"/>
    <property type="resolution" value="2.30 A"/>
    <property type="chains" value="A/B/C/D=1-419"/>
</dbReference>
<dbReference type="PDB" id="3SU9">
    <property type="method" value="X-ray"/>
    <property type="resolution" value="2.20 A"/>
    <property type="chains" value="A=1-419"/>
</dbReference>
<dbReference type="PDB" id="3SWA">
    <property type="method" value="X-ray"/>
    <property type="resolution" value="1.90 A"/>
    <property type="chains" value="A/B=1-419"/>
</dbReference>
<dbReference type="PDB" id="3SWI">
    <property type="method" value="X-ray"/>
    <property type="resolution" value="2.80 A"/>
    <property type="chains" value="A=1-419"/>
</dbReference>
<dbReference type="PDB" id="3SWQ">
    <property type="method" value="X-ray"/>
    <property type="resolution" value="1.83 A"/>
    <property type="chains" value="A=1-419"/>
</dbReference>
<dbReference type="PDB" id="3UPK">
    <property type="method" value="X-ray"/>
    <property type="resolution" value="2.00 A"/>
    <property type="chains" value="A=1-419"/>
</dbReference>
<dbReference type="PDB" id="3V4T">
    <property type="method" value="X-ray"/>
    <property type="resolution" value="2.50 A"/>
    <property type="chains" value="A/B/C/D/E/F/G/H=1-419"/>
</dbReference>
<dbReference type="PDB" id="3V5V">
    <property type="method" value="X-ray"/>
    <property type="resolution" value="2.70 A"/>
    <property type="chains" value="A/B/C/D=1-419"/>
</dbReference>
<dbReference type="PDB" id="4E7B">
    <property type="method" value="X-ray"/>
    <property type="resolution" value="2.00 A"/>
    <property type="chains" value="A/B/C/D=1-419"/>
</dbReference>
<dbReference type="PDB" id="4E7C">
    <property type="method" value="X-ray"/>
    <property type="resolution" value="2.10 A"/>
    <property type="chains" value="A/B/C/D=1-419"/>
</dbReference>
<dbReference type="PDB" id="4E7D">
    <property type="method" value="X-ray"/>
    <property type="resolution" value="2.50 A"/>
    <property type="chains" value="A/B/C/D=1-419"/>
</dbReference>
<dbReference type="PDB" id="4E7E">
    <property type="method" value="X-ray"/>
    <property type="resolution" value="2.30 A"/>
    <property type="chains" value="A/B/C/D=1-419"/>
</dbReference>
<dbReference type="PDB" id="4E7F">
    <property type="method" value="X-ray"/>
    <property type="resolution" value="2.15 A"/>
    <property type="chains" value="A/B/C/D=1-419"/>
</dbReference>
<dbReference type="PDB" id="4E7G">
    <property type="method" value="X-ray"/>
    <property type="resolution" value="1.60 A"/>
    <property type="chains" value="A=1-419"/>
</dbReference>
<dbReference type="PDB" id="4EII">
    <property type="method" value="X-ray"/>
    <property type="resolution" value="1.95 A"/>
    <property type="chains" value="A=1-419"/>
</dbReference>
<dbReference type="PDBsum" id="1DLG"/>
<dbReference type="PDBsum" id="1EJC"/>
<dbReference type="PDBsum" id="1EJD"/>
<dbReference type="PDBsum" id="1EYN"/>
<dbReference type="PDBsum" id="1NAW"/>
<dbReference type="PDBsum" id="1Q3G"/>
<dbReference type="PDBsum" id="1RYW"/>
<dbReference type="PDBsum" id="1YBG"/>
<dbReference type="PDBsum" id="3KQA"/>
<dbReference type="PDBsum" id="3LTH"/>
<dbReference type="PDBsum" id="3SPB"/>
<dbReference type="PDBsum" id="3SU9"/>
<dbReference type="PDBsum" id="3SWA"/>
<dbReference type="PDBsum" id="3SWI"/>
<dbReference type="PDBsum" id="3SWQ"/>
<dbReference type="PDBsum" id="3UPK"/>
<dbReference type="PDBsum" id="3V4T"/>
<dbReference type="PDBsum" id="3V5V"/>
<dbReference type="PDBsum" id="4E7B"/>
<dbReference type="PDBsum" id="4E7C"/>
<dbReference type="PDBsum" id="4E7D"/>
<dbReference type="PDBsum" id="4E7E"/>
<dbReference type="PDBsum" id="4E7F"/>
<dbReference type="PDBsum" id="4E7G"/>
<dbReference type="PDBsum" id="4EII"/>
<dbReference type="SMR" id="P33038"/>
<dbReference type="STRING" id="716541.ECL_04571"/>
<dbReference type="BindingDB" id="P33038"/>
<dbReference type="DrugBank" id="DB01879">
    <property type="generic name" value="(S)-2-{Methyl-[2-(Naphthalene-2-Sulfonylamino)-5-(Naphthalene-2-Sulfonyloxy)-Benzoyl]-Amino}-Succinicacid"/>
</dbReference>
<dbReference type="DrugBank" id="DB04174">
    <property type="generic name" value="3'-1-carboxy-1-phosphonooxy-ethoxy-uridine-diphosphate-N-acetylglucosamine"/>
</dbReference>
<dbReference type="DrugBank" id="DB04474">
    <property type="generic name" value="8-anilinonaphthalene-1-sulfonic acid"/>
</dbReference>
<dbReference type="DrugBank" id="DB02435">
    <property type="generic name" value="Aminomethylcyclohexane"/>
</dbReference>
<dbReference type="DrugBank" id="DB02995">
    <property type="generic name" value="Cyclohexylammonium Ion"/>
</dbReference>
<dbReference type="EnsemblBacteria" id="ADF64099">
    <property type="protein sequence ID" value="ADF64099"/>
    <property type="gene ID" value="ECL_04571"/>
</dbReference>
<dbReference type="GeneID" id="83575387"/>
<dbReference type="KEGG" id="enc:ECL_04571"/>
<dbReference type="PATRIC" id="fig|716541.4.peg.4720"/>
<dbReference type="eggNOG" id="COG0766">
    <property type="taxonomic scope" value="Bacteria"/>
</dbReference>
<dbReference type="HOGENOM" id="CLU_027387_0_0_6"/>
<dbReference type="OrthoDB" id="9803760at2"/>
<dbReference type="BRENDA" id="2.5.1.7">
    <property type="organism ID" value="155"/>
</dbReference>
<dbReference type="SABIO-RK" id="P33038"/>
<dbReference type="UniPathway" id="UPA00219"/>
<dbReference type="EvolutionaryTrace" id="P33038"/>
<dbReference type="PRO" id="PR:P33038"/>
<dbReference type="Proteomes" id="UP000002363">
    <property type="component" value="Chromosome"/>
</dbReference>
<dbReference type="GO" id="GO:0005737">
    <property type="term" value="C:cytoplasm"/>
    <property type="evidence" value="ECO:0007669"/>
    <property type="project" value="UniProtKB-SubCell"/>
</dbReference>
<dbReference type="GO" id="GO:0008760">
    <property type="term" value="F:UDP-N-acetylglucosamine 1-carboxyvinyltransferase activity"/>
    <property type="evidence" value="ECO:0007669"/>
    <property type="project" value="UniProtKB-UniRule"/>
</dbReference>
<dbReference type="GO" id="GO:0051301">
    <property type="term" value="P:cell division"/>
    <property type="evidence" value="ECO:0007669"/>
    <property type="project" value="UniProtKB-KW"/>
</dbReference>
<dbReference type="GO" id="GO:0071555">
    <property type="term" value="P:cell wall organization"/>
    <property type="evidence" value="ECO:0007669"/>
    <property type="project" value="UniProtKB-KW"/>
</dbReference>
<dbReference type="GO" id="GO:0009252">
    <property type="term" value="P:peptidoglycan biosynthetic process"/>
    <property type="evidence" value="ECO:0007669"/>
    <property type="project" value="UniProtKB-UniRule"/>
</dbReference>
<dbReference type="GO" id="GO:0008360">
    <property type="term" value="P:regulation of cell shape"/>
    <property type="evidence" value="ECO:0007669"/>
    <property type="project" value="UniProtKB-KW"/>
</dbReference>
<dbReference type="GO" id="GO:0019277">
    <property type="term" value="P:UDP-N-acetylgalactosamine biosynthetic process"/>
    <property type="evidence" value="ECO:0007669"/>
    <property type="project" value="InterPro"/>
</dbReference>
<dbReference type="CDD" id="cd01555">
    <property type="entry name" value="UdpNAET"/>
    <property type="match status" value="1"/>
</dbReference>
<dbReference type="FunFam" id="3.65.10.10:FF:000002">
    <property type="entry name" value="UDP-N-acetylglucosamine 1-carboxyvinyltransferase"/>
    <property type="match status" value="1"/>
</dbReference>
<dbReference type="Gene3D" id="3.65.10.10">
    <property type="entry name" value="Enolpyruvate transferase domain"/>
    <property type="match status" value="2"/>
</dbReference>
<dbReference type="HAMAP" id="MF_00111">
    <property type="entry name" value="MurA"/>
    <property type="match status" value="1"/>
</dbReference>
<dbReference type="InterPro" id="IPR001986">
    <property type="entry name" value="Enolpyruvate_Tfrase_dom"/>
</dbReference>
<dbReference type="InterPro" id="IPR036968">
    <property type="entry name" value="Enolpyruvate_Tfrase_sf"/>
</dbReference>
<dbReference type="InterPro" id="IPR050068">
    <property type="entry name" value="MurA_subfamily"/>
</dbReference>
<dbReference type="InterPro" id="IPR013792">
    <property type="entry name" value="RNA3'P_cycl/enolpyr_Trfase_a/b"/>
</dbReference>
<dbReference type="InterPro" id="IPR005750">
    <property type="entry name" value="UDP_GlcNAc_COvinyl_MurA"/>
</dbReference>
<dbReference type="NCBIfam" id="TIGR01072">
    <property type="entry name" value="murA"/>
    <property type="match status" value="1"/>
</dbReference>
<dbReference type="NCBIfam" id="NF006873">
    <property type="entry name" value="PRK09369.1"/>
    <property type="match status" value="1"/>
</dbReference>
<dbReference type="PANTHER" id="PTHR43783">
    <property type="entry name" value="UDP-N-ACETYLGLUCOSAMINE 1-CARBOXYVINYLTRANSFERASE"/>
    <property type="match status" value="1"/>
</dbReference>
<dbReference type="PANTHER" id="PTHR43783:SF1">
    <property type="entry name" value="UDP-N-ACETYLGLUCOSAMINE 1-CARBOXYVINYLTRANSFERASE"/>
    <property type="match status" value="1"/>
</dbReference>
<dbReference type="Pfam" id="PF00275">
    <property type="entry name" value="EPSP_synthase"/>
    <property type="match status" value="1"/>
</dbReference>
<dbReference type="SUPFAM" id="SSF55205">
    <property type="entry name" value="EPT/RTPC-like"/>
    <property type="match status" value="1"/>
</dbReference>
<sequence length="419" mass="44777">MDKFRVQGPTRLQGEVTISGAKNAALPILFAALLAEEPVEIQNVPKLKDIDTTMKLLTQLGTKVERNGSVWIDASNVNNFSAPYDLVKTMRASIWALGPLVARFGQGQVSLPGGCAIGARPVDLHIFGLEKLGAEIKLEEGYVKASVNGRLKGAHIVMDKVSVGATVTIMSAATLAEGTTIIENAAREPEIVDTANFLVALGAKISGQGTDRITIEGVERLGGGVYRVLPDRIETGTFLVAAAISGGKIVCRNAQPDTLDAVLAKLREAGADIETGEDWISLDMHGKRPKAVTVRTAPHPAFPTDMQAQFTLLNLVAEGTGVITETIFENRFMHVPELIRMGAHAEIESNTVICHGVEKLSGAQVMATDLRASASLVLAGCIAEGTTVVDRIYHIDRGYERIEDKLRALGANIERVKGE</sequence>
<organism>
    <name type="scientific">Enterobacter cloacae subsp. cloacae (strain ATCC 13047 / DSM 30054 / NBRC 13535 / NCTC 10005 / WDCM 00083 / NCDC 279-56)</name>
    <dbReference type="NCBI Taxonomy" id="716541"/>
    <lineage>
        <taxon>Bacteria</taxon>
        <taxon>Pseudomonadati</taxon>
        <taxon>Pseudomonadota</taxon>
        <taxon>Gammaproteobacteria</taxon>
        <taxon>Enterobacterales</taxon>
        <taxon>Enterobacteriaceae</taxon>
        <taxon>Enterobacter</taxon>
        <taxon>Enterobacter cloacae complex</taxon>
    </lineage>
</organism>
<keyword id="KW-0002">3D-structure</keyword>
<keyword id="KW-0131">Cell cycle</keyword>
<keyword id="KW-0132">Cell division</keyword>
<keyword id="KW-0133">Cell shape</keyword>
<keyword id="KW-0961">Cell wall biogenesis/degradation</keyword>
<keyword id="KW-0963">Cytoplasm</keyword>
<keyword id="KW-0903">Direct protein sequencing</keyword>
<keyword id="KW-0573">Peptidoglycan synthesis</keyword>
<keyword id="KW-0670">Pyruvate</keyword>
<keyword id="KW-1185">Reference proteome</keyword>
<keyword id="KW-0808">Transferase</keyword>
<protein>
    <recommendedName>
        <fullName evidence="1">UDP-N-acetylglucosamine 1-carboxyvinyltransferase</fullName>
        <ecNumber evidence="1">2.5.1.7</ecNumber>
    </recommendedName>
    <alternativeName>
        <fullName evidence="1">Enoylpyruvate transferase</fullName>
    </alternativeName>
    <alternativeName>
        <fullName evidence="1">UDP-N-acetylglucosamine enolpyruvyl transferase</fullName>
        <shortName evidence="1">EPT</shortName>
    </alternativeName>
</protein>
<gene>
    <name evidence="1" type="primary">murA</name>
    <name type="synonym">murZ</name>
    <name type="ordered locus">ECL_04571</name>
</gene>